<name>PUR9_OENOB</name>
<comment type="catalytic activity">
    <reaction evidence="1">
        <text>(6R)-10-formyltetrahydrofolate + 5-amino-1-(5-phospho-beta-D-ribosyl)imidazole-4-carboxamide = 5-formamido-1-(5-phospho-D-ribosyl)imidazole-4-carboxamide + (6S)-5,6,7,8-tetrahydrofolate</text>
        <dbReference type="Rhea" id="RHEA:22192"/>
        <dbReference type="ChEBI" id="CHEBI:57453"/>
        <dbReference type="ChEBI" id="CHEBI:58467"/>
        <dbReference type="ChEBI" id="CHEBI:58475"/>
        <dbReference type="ChEBI" id="CHEBI:195366"/>
        <dbReference type="EC" id="2.1.2.3"/>
    </reaction>
</comment>
<comment type="catalytic activity">
    <reaction evidence="1">
        <text>IMP + H2O = 5-formamido-1-(5-phospho-D-ribosyl)imidazole-4-carboxamide</text>
        <dbReference type="Rhea" id="RHEA:18445"/>
        <dbReference type="ChEBI" id="CHEBI:15377"/>
        <dbReference type="ChEBI" id="CHEBI:58053"/>
        <dbReference type="ChEBI" id="CHEBI:58467"/>
        <dbReference type="EC" id="3.5.4.10"/>
    </reaction>
</comment>
<comment type="pathway">
    <text evidence="1">Purine metabolism; IMP biosynthesis via de novo pathway; 5-formamido-1-(5-phospho-D-ribosyl)imidazole-4-carboxamide from 5-amino-1-(5-phospho-D-ribosyl)imidazole-4-carboxamide (10-formyl THF route): step 1/1.</text>
</comment>
<comment type="pathway">
    <text evidence="1">Purine metabolism; IMP biosynthesis via de novo pathway; IMP from 5-formamido-1-(5-phospho-D-ribosyl)imidazole-4-carboxamide: step 1/1.</text>
</comment>
<comment type="domain">
    <text evidence="1">The IMP cyclohydrolase activity resides in the N-terminal region.</text>
</comment>
<comment type="similarity">
    <text evidence="1">Belongs to the PurH family.</text>
</comment>
<gene>
    <name evidence="1" type="primary">purH</name>
    <name type="ordered locus">OEOE_1129</name>
</gene>
<reference key="1">
    <citation type="journal article" date="2006" name="Proc. Natl. Acad. Sci. U.S.A.">
        <title>Comparative genomics of the lactic acid bacteria.</title>
        <authorList>
            <person name="Makarova K.S."/>
            <person name="Slesarev A."/>
            <person name="Wolf Y.I."/>
            <person name="Sorokin A."/>
            <person name="Mirkin B."/>
            <person name="Koonin E.V."/>
            <person name="Pavlov A."/>
            <person name="Pavlova N."/>
            <person name="Karamychev V."/>
            <person name="Polouchine N."/>
            <person name="Shakhova V."/>
            <person name="Grigoriev I."/>
            <person name="Lou Y."/>
            <person name="Rohksar D."/>
            <person name="Lucas S."/>
            <person name="Huang K."/>
            <person name="Goodstein D.M."/>
            <person name="Hawkins T."/>
            <person name="Plengvidhya V."/>
            <person name="Welker D."/>
            <person name="Hughes J."/>
            <person name="Goh Y."/>
            <person name="Benson A."/>
            <person name="Baldwin K."/>
            <person name="Lee J.-H."/>
            <person name="Diaz-Muniz I."/>
            <person name="Dosti B."/>
            <person name="Smeianov V."/>
            <person name="Wechter W."/>
            <person name="Barabote R."/>
            <person name="Lorca G."/>
            <person name="Altermann E."/>
            <person name="Barrangou R."/>
            <person name="Ganesan B."/>
            <person name="Xie Y."/>
            <person name="Rawsthorne H."/>
            <person name="Tamir D."/>
            <person name="Parker C."/>
            <person name="Breidt F."/>
            <person name="Broadbent J.R."/>
            <person name="Hutkins R."/>
            <person name="O'Sullivan D."/>
            <person name="Steele J."/>
            <person name="Unlu G."/>
            <person name="Saier M.H. Jr."/>
            <person name="Klaenhammer T."/>
            <person name="Richardson P."/>
            <person name="Kozyavkin S."/>
            <person name="Weimer B.C."/>
            <person name="Mills D.A."/>
        </authorList>
    </citation>
    <scope>NUCLEOTIDE SEQUENCE [LARGE SCALE GENOMIC DNA]</scope>
    <source>
        <strain>ATCC BAA-331 / PSU-1</strain>
    </source>
</reference>
<proteinExistence type="inferred from homology"/>
<sequence>MKRALLSVSDKRGLIDFAKGLIKNNYEIISTGGTLKFLTEAGVKAKAVEEITGFPEILNGRVKTLHPKIHAALLAKRENSEHMKTLEEHQITPIDLLAVNLYPFKETIEKKDVSYDQAIENIDIGGPSMLRSAAKNARDVIVVVDPDDYDSILKAIANDDLSHDFRRHLQAKTFRHTAAYDALIADYLSKEEYPEKLTVTYDKDFDLRYGENPNQTAAVYADAIPKAYSILQAKILHGKKLSYNNIKDADAALRTIADFQDQPTVVTLKHMNPAGIGQAITIEKAWDKAFYADDISIFGGIVVLNREVDLATAQKMHTIFLEIIIAPGFSEEAYQILAKKKNLRLLTVAMTNTLPKELELTSVLGGAVVQEMDRLVENAADFEVVSSAKPTDEQLEALVFAQKAVKHVKSNAILIAAQGQTLGIGAGQPNRIDSVKIAFKHAEAKKNFDQAVLASDAFFPMDDSVEFAAEHGIKAIVEPGGSIKDKDSIAMADKLGVVLVFSHNRHFRH</sequence>
<feature type="chain" id="PRO_1000018921" description="Bifunctional purine biosynthesis protein PurH">
    <location>
        <begin position="1"/>
        <end position="509"/>
    </location>
</feature>
<feature type="domain" description="MGS-like" evidence="2">
    <location>
        <begin position="1"/>
        <end position="144"/>
    </location>
</feature>
<dbReference type="EC" id="2.1.2.3" evidence="1"/>
<dbReference type="EC" id="3.5.4.10" evidence="1"/>
<dbReference type="EMBL" id="CP000411">
    <property type="protein sequence ID" value="ABJ57026.1"/>
    <property type="molecule type" value="Genomic_DNA"/>
</dbReference>
<dbReference type="RefSeq" id="WP_002821345.1">
    <property type="nucleotide sequence ID" value="NC_008528.1"/>
</dbReference>
<dbReference type="SMR" id="Q04EU6"/>
<dbReference type="STRING" id="203123.OEOE_1129"/>
<dbReference type="KEGG" id="ooe:OEOE_1129"/>
<dbReference type="PATRIC" id="fig|203123.7.peg.1153"/>
<dbReference type="eggNOG" id="COG0138">
    <property type="taxonomic scope" value="Bacteria"/>
</dbReference>
<dbReference type="HOGENOM" id="CLU_016316_5_2_9"/>
<dbReference type="UniPathway" id="UPA00074">
    <property type="reaction ID" value="UER00133"/>
</dbReference>
<dbReference type="UniPathway" id="UPA00074">
    <property type="reaction ID" value="UER00135"/>
</dbReference>
<dbReference type="Proteomes" id="UP000000774">
    <property type="component" value="Chromosome"/>
</dbReference>
<dbReference type="GO" id="GO:0005829">
    <property type="term" value="C:cytosol"/>
    <property type="evidence" value="ECO:0007669"/>
    <property type="project" value="TreeGrafter"/>
</dbReference>
<dbReference type="GO" id="GO:0003937">
    <property type="term" value="F:IMP cyclohydrolase activity"/>
    <property type="evidence" value="ECO:0007669"/>
    <property type="project" value="UniProtKB-UniRule"/>
</dbReference>
<dbReference type="GO" id="GO:0004643">
    <property type="term" value="F:phosphoribosylaminoimidazolecarboxamide formyltransferase activity"/>
    <property type="evidence" value="ECO:0007669"/>
    <property type="project" value="UniProtKB-UniRule"/>
</dbReference>
<dbReference type="GO" id="GO:0006189">
    <property type="term" value="P:'de novo' IMP biosynthetic process"/>
    <property type="evidence" value="ECO:0007669"/>
    <property type="project" value="UniProtKB-UniRule"/>
</dbReference>
<dbReference type="CDD" id="cd01421">
    <property type="entry name" value="IMPCH"/>
    <property type="match status" value="1"/>
</dbReference>
<dbReference type="FunFam" id="3.40.140.20:FF:000001">
    <property type="entry name" value="Bifunctional purine biosynthesis protein PurH"/>
    <property type="match status" value="1"/>
</dbReference>
<dbReference type="FunFam" id="3.40.50.1380:FF:000001">
    <property type="entry name" value="Bifunctional purine biosynthesis protein PurH"/>
    <property type="match status" value="1"/>
</dbReference>
<dbReference type="Gene3D" id="3.40.140.20">
    <property type="match status" value="2"/>
</dbReference>
<dbReference type="Gene3D" id="3.40.50.1380">
    <property type="entry name" value="Methylglyoxal synthase-like domain"/>
    <property type="match status" value="1"/>
</dbReference>
<dbReference type="HAMAP" id="MF_00139">
    <property type="entry name" value="PurH"/>
    <property type="match status" value="1"/>
</dbReference>
<dbReference type="InterPro" id="IPR024051">
    <property type="entry name" value="AICAR_Tfase_dup_dom_sf"/>
</dbReference>
<dbReference type="InterPro" id="IPR016193">
    <property type="entry name" value="Cytidine_deaminase-like"/>
</dbReference>
<dbReference type="InterPro" id="IPR011607">
    <property type="entry name" value="MGS-like_dom"/>
</dbReference>
<dbReference type="InterPro" id="IPR036914">
    <property type="entry name" value="MGS-like_dom_sf"/>
</dbReference>
<dbReference type="InterPro" id="IPR002695">
    <property type="entry name" value="PurH-like"/>
</dbReference>
<dbReference type="NCBIfam" id="NF002049">
    <property type="entry name" value="PRK00881.1"/>
    <property type="match status" value="1"/>
</dbReference>
<dbReference type="NCBIfam" id="TIGR00355">
    <property type="entry name" value="purH"/>
    <property type="match status" value="1"/>
</dbReference>
<dbReference type="PANTHER" id="PTHR11692:SF0">
    <property type="entry name" value="BIFUNCTIONAL PURINE BIOSYNTHESIS PROTEIN ATIC"/>
    <property type="match status" value="1"/>
</dbReference>
<dbReference type="PANTHER" id="PTHR11692">
    <property type="entry name" value="BIFUNCTIONAL PURINE BIOSYNTHESIS PROTEIN PURH"/>
    <property type="match status" value="1"/>
</dbReference>
<dbReference type="Pfam" id="PF01808">
    <property type="entry name" value="AICARFT_IMPCHas"/>
    <property type="match status" value="1"/>
</dbReference>
<dbReference type="Pfam" id="PF02142">
    <property type="entry name" value="MGS"/>
    <property type="match status" value="1"/>
</dbReference>
<dbReference type="PIRSF" id="PIRSF000414">
    <property type="entry name" value="AICARFT_IMPCHas"/>
    <property type="match status" value="1"/>
</dbReference>
<dbReference type="SMART" id="SM00798">
    <property type="entry name" value="AICARFT_IMPCHas"/>
    <property type="match status" value="1"/>
</dbReference>
<dbReference type="SMART" id="SM00851">
    <property type="entry name" value="MGS"/>
    <property type="match status" value="1"/>
</dbReference>
<dbReference type="SUPFAM" id="SSF53927">
    <property type="entry name" value="Cytidine deaminase-like"/>
    <property type="match status" value="1"/>
</dbReference>
<dbReference type="SUPFAM" id="SSF52335">
    <property type="entry name" value="Methylglyoxal synthase-like"/>
    <property type="match status" value="1"/>
</dbReference>
<dbReference type="PROSITE" id="PS51855">
    <property type="entry name" value="MGS"/>
    <property type="match status" value="1"/>
</dbReference>
<accession>Q04EU6</accession>
<evidence type="ECO:0000255" key="1">
    <source>
        <dbReference type="HAMAP-Rule" id="MF_00139"/>
    </source>
</evidence>
<evidence type="ECO:0000255" key="2">
    <source>
        <dbReference type="PROSITE-ProRule" id="PRU01202"/>
    </source>
</evidence>
<organism>
    <name type="scientific">Oenococcus oeni (strain ATCC BAA-331 / PSU-1)</name>
    <dbReference type="NCBI Taxonomy" id="203123"/>
    <lineage>
        <taxon>Bacteria</taxon>
        <taxon>Bacillati</taxon>
        <taxon>Bacillota</taxon>
        <taxon>Bacilli</taxon>
        <taxon>Lactobacillales</taxon>
        <taxon>Lactobacillaceae</taxon>
        <taxon>Oenococcus</taxon>
    </lineage>
</organism>
<keyword id="KW-0378">Hydrolase</keyword>
<keyword id="KW-0511">Multifunctional enzyme</keyword>
<keyword id="KW-0658">Purine biosynthesis</keyword>
<keyword id="KW-1185">Reference proteome</keyword>
<keyword id="KW-0808">Transferase</keyword>
<protein>
    <recommendedName>
        <fullName evidence="1">Bifunctional purine biosynthesis protein PurH</fullName>
    </recommendedName>
    <domain>
        <recommendedName>
            <fullName evidence="1">Phosphoribosylaminoimidazolecarboxamide formyltransferase</fullName>
            <ecNumber evidence="1">2.1.2.3</ecNumber>
        </recommendedName>
        <alternativeName>
            <fullName evidence="1">AICAR transformylase</fullName>
        </alternativeName>
    </domain>
    <domain>
        <recommendedName>
            <fullName evidence="1">IMP cyclohydrolase</fullName>
            <ecNumber evidence="1">3.5.4.10</ecNumber>
        </recommendedName>
        <alternativeName>
            <fullName evidence="1">ATIC</fullName>
        </alternativeName>
        <alternativeName>
            <fullName evidence="1">IMP synthase</fullName>
        </alternativeName>
        <alternativeName>
            <fullName evidence="1">Inosinicase</fullName>
        </alternativeName>
    </domain>
</protein>